<keyword id="KW-0050">Antiport</keyword>
<keyword id="KW-1003">Cell membrane</keyword>
<keyword id="KW-0406">Ion transport</keyword>
<keyword id="KW-0472">Membrane</keyword>
<keyword id="KW-0812">Transmembrane</keyword>
<keyword id="KW-1133">Transmembrane helix</keyword>
<keyword id="KW-0813">Transport</keyword>
<dbReference type="EMBL" id="BA000033">
    <property type="protein sequence ID" value="BAB94456.1"/>
    <property type="molecule type" value="Genomic_DNA"/>
</dbReference>
<dbReference type="RefSeq" id="WP_000406611.1">
    <property type="nucleotide sequence ID" value="NC_003923.1"/>
</dbReference>
<dbReference type="SMR" id="Q8NXS9"/>
<dbReference type="KEGG" id="sam:MW0591"/>
<dbReference type="HOGENOM" id="CLU_121334_0_3_9"/>
<dbReference type="GO" id="GO:0005886">
    <property type="term" value="C:plasma membrane"/>
    <property type="evidence" value="ECO:0007669"/>
    <property type="project" value="UniProtKB-SubCell"/>
</dbReference>
<dbReference type="GO" id="GO:0015385">
    <property type="term" value="F:sodium:proton antiporter activity"/>
    <property type="evidence" value="ECO:0007669"/>
    <property type="project" value="TreeGrafter"/>
</dbReference>
<dbReference type="InterPro" id="IPR005133">
    <property type="entry name" value="PhaG_MnhG_YufB"/>
</dbReference>
<dbReference type="NCBIfam" id="TIGR01300">
    <property type="entry name" value="CPA3_mnhG_phaG"/>
    <property type="match status" value="1"/>
</dbReference>
<dbReference type="NCBIfam" id="NF009236">
    <property type="entry name" value="PRK12586.1"/>
    <property type="match status" value="1"/>
</dbReference>
<dbReference type="NCBIfam" id="NF009314">
    <property type="entry name" value="PRK12674.1-2"/>
    <property type="match status" value="1"/>
</dbReference>
<dbReference type="PANTHER" id="PTHR34703">
    <property type="entry name" value="ANTIPORTER SUBUNIT MNHG2-RELATED"/>
    <property type="match status" value="1"/>
</dbReference>
<dbReference type="PANTHER" id="PTHR34703:SF1">
    <property type="entry name" value="ANTIPORTER SUBUNIT MNHG2-RELATED"/>
    <property type="match status" value="1"/>
</dbReference>
<dbReference type="Pfam" id="PF03334">
    <property type="entry name" value="PhaG_MnhG_YufB"/>
    <property type="match status" value="1"/>
</dbReference>
<sequence>MEITKEIFSLIAAVMLLLGSFIALISAIGIVKFQDVFLRSHAATKSSTLSVLLTLIGVLIYFIVNTGFFSVRLLLSLVFINLTSPVGMHLVARAAYRNGAYMYRKNDAHTHASILLSSNEQNSTEALQLRAEKREEHRKKWYQND</sequence>
<accession>Q8NXS9</accession>
<protein>
    <recommendedName>
        <fullName>Putative antiporter subunit mnhG2</fullName>
    </recommendedName>
    <alternativeName>
        <fullName>Mrp complex subunit G2</fullName>
    </alternativeName>
    <alternativeName>
        <fullName>Putative NADH-ubiquinone oxidoreductase subunit mnhF2</fullName>
    </alternativeName>
</protein>
<comment type="subunit">
    <text evidence="1">May form a heterooligomeric complex that consists of seven subunits: mnhA2, mnhB2, mnhC2, mnhD2, mnhE2, mnhF2 and mnhG2.</text>
</comment>
<comment type="subcellular location">
    <subcellularLocation>
        <location evidence="3">Cell membrane</location>
        <topology evidence="3">Multi-pass membrane protein</topology>
    </subcellularLocation>
</comment>
<comment type="similarity">
    <text evidence="3">Belongs to the CPA3 antiporters (TC 2.A.63) subunit G family.</text>
</comment>
<reference key="1">
    <citation type="journal article" date="2002" name="Lancet">
        <title>Genome and virulence determinants of high virulence community-acquired MRSA.</title>
        <authorList>
            <person name="Baba T."/>
            <person name="Takeuchi F."/>
            <person name="Kuroda M."/>
            <person name="Yuzawa H."/>
            <person name="Aoki K."/>
            <person name="Oguchi A."/>
            <person name="Nagai Y."/>
            <person name="Iwama N."/>
            <person name="Asano K."/>
            <person name="Naimi T."/>
            <person name="Kuroda H."/>
            <person name="Cui L."/>
            <person name="Yamamoto K."/>
            <person name="Hiramatsu K."/>
        </authorList>
    </citation>
    <scope>NUCLEOTIDE SEQUENCE [LARGE SCALE GENOMIC DNA]</scope>
    <source>
        <strain>MW2</strain>
    </source>
</reference>
<organism>
    <name type="scientific">Staphylococcus aureus (strain MW2)</name>
    <dbReference type="NCBI Taxonomy" id="196620"/>
    <lineage>
        <taxon>Bacteria</taxon>
        <taxon>Bacillati</taxon>
        <taxon>Bacillota</taxon>
        <taxon>Bacilli</taxon>
        <taxon>Bacillales</taxon>
        <taxon>Staphylococcaceae</taxon>
        <taxon>Staphylococcus</taxon>
    </lineage>
</organism>
<name>MNHG2_STAAW</name>
<gene>
    <name type="primary">mnhG2</name>
    <name type="synonym">mrpG2</name>
    <name type="ordered locus">MW0591</name>
</gene>
<feature type="chain" id="PRO_0000372180" description="Putative antiporter subunit mnhG2">
    <location>
        <begin position="1"/>
        <end position="145"/>
    </location>
</feature>
<feature type="transmembrane region" description="Helical" evidence="2">
    <location>
        <begin position="11"/>
        <end position="31"/>
    </location>
</feature>
<feature type="transmembrane region" description="Helical" evidence="2">
    <location>
        <begin position="51"/>
        <end position="71"/>
    </location>
</feature>
<feature type="transmembrane region" description="Helical" evidence="2">
    <location>
        <begin position="72"/>
        <end position="92"/>
    </location>
</feature>
<evidence type="ECO:0000250" key="1"/>
<evidence type="ECO:0000255" key="2"/>
<evidence type="ECO:0000305" key="3"/>
<proteinExistence type="inferred from homology"/>